<name>CH601_BRASO</name>
<reference key="1">
    <citation type="journal article" date="2007" name="Science">
        <title>Legumes symbioses: absence of nod genes in photosynthetic bradyrhizobia.</title>
        <authorList>
            <person name="Giraud E."/>
            <person name="Moulin L."/>
            <person name="Vallenet D."/>
            <person name="Barbe V."/>
            <person name="Cytryn E."/>
            <person name="Avarre J.-C."/>
            <person name="Jaubert M."/>
            <person name="Simon D."/>
            <person name="Cartieaux F."/>
            <person name="Prin Y."/>
            <person name="Bena G."/>
            <person name="Hannibal L."/>
            <person name="Fardoux J."/>
            <person name="Kojadinovic M."/>
            <person name="Vuillet L."/>
            <person name="Lajus A."/>
            <person name="Cruveiller S."/>
            <person name="Rouy Z."/>
            <person name="Mangenot S."/>
            <person name="Segurens B."/>
            <person name="Dossat C."/>
            <person name="Franck W.L."/>
            <person name="Chang W.-S."/>
            <person name="Saunders E."/>
            <person name="Bruce D."/>
            <person name="Richardson P."/>
            <person name="Normand P."/>
            <person name="Dreyfus B."/>
            <person name="Pignol D."/>
            <person name="Stacey G."/>
            <person name="Emerich D."/>
            <person name="Vermeglio A."/>
            <person name="Medigue C."/>
            <person name="Sadowsky M."/>
        </authorList>
    </citation>
    <scope>NUCLEOTIDE SEQUENCE [LARGE SCALE GENOMIC DNA]</scope>
    <source>
        <strain>ORS 278</strain>
    </source>
</reference>
<sequence>MAAKDVKFSTDARDRMLRGVDILANAVKVTLGPKGRNVVIEKSFGAPRITKDGVTVAKEIELEDKFENMGAQMVREVASKTADLAGDGTTTATVLAQAIVKEGAKSVAAGMNPMDLKRGIDLAVEAIVKDLKAHAKKITSNDEIAQVGTISANGDSEIGRFLAEAMQKVGNEGVITVEEAKSLDTELEVVEGMQFDRGYVSPYFVTNSEKMRVELEDPYILIHEKKLSGLQTMLPLLEAVVQSGKPLLIVAEDVEGEALATLVVNKLRGGLKIAAVKAPGFGDRRKAMLEDIAILTGGTTISEDLGIKLENVTLSMLGRAKKVVIDKENTTIVDGAGAKKDIEARTQQIRLQIEETTSDYDREKLQERLAKLAGGVAVIRVGGATEVEVKERKDRVDDALHATRAAVEEGILPGGGVALLRATKVLDGVKTANADQKAGVDIIRRAIQVPVRQIVQNAGDDGSLVVGKLLEKDSYSWGFNAATGEYQDLVQAGVIDPAKVVRTALQDAASVASLLITTEALVADKPKKAETAAAPAMDY</sequence>
<proteinExistence type="inferred from homology"/>
<accession>A4YRI5</accession>
<feature type="chain" id="PRO_0000331978" description="Chaperonin GroEL 1">
    <location>
        <begin position="1"/>
        <end position="539"/>
    </location>
</feature>
<feature type="binding site" evidence="1">
    <location>
        <begin position="30"/>
        <end position="33"/>
    </location>
    <ligand>
        <name>ATP</name>
        <dbReference type="ChEBI" id="CHEBI:30616"/>
    </ligand>
</feature>
<feature type="binding site" evidence="1">
    <location>
        <position position="51"/>
    </location>
    <ligand>
        <name>ATP</name>
        <dbReference type="ChEBI" id="CHEBI:30616"/>
    </ligand>
</feature>
<feature type="binding site" evidence="1">
    <location>
        <begin position="87"/>
        <end position="91"/>
    </location>
    <ligand>
        <name>ATP</name>
        <dbReference type="ChEBI" id="CHEBI:30616"/>
    </ligand>
</feature>
<feature type="binding site" evidence="1">
    <location>
        <position position="415"/>
    </location>
    <ligand>
        <name>ATP</name>
        <dbReference type="ChEBI" id="CHEBI:30616"/>
    </ligand>
</feature>
<feature type="binding site" evidence="1">
    <location>
        <begin position="480"/>
        <end position="482"/>
    </location>
    <ligand>
        <name>ATP</name>
        <dbReference type="ChEBI" id="CHEBI:30616"/>
    </ligand>
</feature>
<feature type="binding site" evidence="1">
    <location>
        <position position="496"/>
    </location>
    <ligand>
        <name>ATP</name>
        <dbReference type="ChEBI" id="CHEBI:30616"/>
    </ligand>
</feature>
<evidence type="ECO:0000255" key="1">
    <source>
        <dbReference type="HAMAP-Rule" id="MF_00600"/>
    </source>
</evidence>
<comment type="function">
    <text evidence="1">Together with its co-chaperonin GroES, plays an essential role in assisting protein folding. The GroEL-GroES system forms a nano-cage that allows encapsulation of the non-native substrate proteins and provides a physical environment optimized to promote and accelerate protein folding.</text>
</comment>
<comment type="catalytic activity">
    <reaction evidence="1">
        <text>ATP + H2O + a folded polypeptide = ADP + phosphate + an unfolded polypeptide.</text>
        <dbReference type="EC" id="5.6.1.7"/>
    </reaction>
</comment>
<comment type="subunit">
    <text evidence="1">Forms a cylinder of 14 subunits composed of two heptameric rings stacked back-to-back. Interacts with the co-chaperonin GroES.</text>
</comment>
<comment type="subcellular location">
    <subcellularLocation>
        <location evidence="1">Cytoplasm</location>
    </subcellularLocation>
</comment>
<comment type="similarity">
    <text evidence="1">Belongs to the chaperonin (HSP60) family.</text>
</comment>
<organism>
    <name type="scientific">Bradyrhizobium sp. (strain ORS 278)</name>
    <dbReference type="NCBI Taxonomy" id="114615"/>
    <lineage>
        <taxon>Bacteria</taxon>
        <taxon>Pseudomonadati</taxon>
        <taxon>Pseudomonadota</taxon>
        <taxon>Alphaproteobacteria</taxon>
        <taxon>Hyphomicrobiales</taxon>
        <taxon>Nitrobacteraceae</taxon>
        <taxon>Bradyrhizobium</taxon>
    </lineage>
</organism>
<dbReference type="EC" id="5.6.1.7" evidence="1"/>
<dbReference type="EMBL" id="CU234118">
    <property type="protein sequence ID" value="CAL76511.1"/>
    <property type="molecule type" value="Genomic_DNA"/>
</dbReference>
<dbReference type="RefSeq" id="WP_011925719.1">
    <property type="nucleotide sequence ID" value="NC_009445.1"/>
</dbReference>
<dbReference type="SMR" id="A4YRI5"/>
<dbReference type="STRING" id="114615.BRADO2697"/>
<dbReference type="KEGG" id="bra:BRADO2697"/>
<dbReference type="eggNOG" id="COG0459">
    <property type="taxonomic scope" value="Bacteria"/>
</dbReference>
<dbReference type="HOGENOM" id="CLU_016503_3_0_5"/>
<dbReference type="OrthoDB" id="9766614at2"/>
<dbReference type="Proteomes" id="UP000001994">
    <property type="component" value="Chromosome"/>
</dbReference>
<dbReference type="GO" id="GO:0005737">
    <property type="term" value="C:cytoplasm"/>
    <property type="evidence" value="ECO:0007669"/>
    <property type="project" value="UniProtKB-SubCell"/>
</dbReference>
<dbReference type="GO" id="GO:0005524">
    <property type="term" value="F:ATP binding"/>
    <property type="evidence" value="ECO:0007669"/>
    <property type="project" value="UniProtKB-UniRule"/>
</dbReference>
<dbReference type="GO" id="GO:0140662">
    <property type="term" value="F:ATP-dependent protein folding chaperone"/>
    <property type="evidence" value="ECO:0007669"/>
    <property type="project" value="InterPro"/>
</dbReference>
<dbReference type="GO" id="GO:0016853">
    <property type="term" value="F:isomerase activity"/>
    <property type="evidence" value="ECO:0007669"/>
    <property type="project" value="UniProtKB-KW"/>
</dbReference>
<dbReference type="GO" id="GO:0051082">
    <property type="term" value="F:unfolded protein binding"/>
    <property type="evidence" value="ECO:0007669"/>
    <property type="project" value="UniProtKB-UniRule"/>
</dbReference>
<dbReference type="GO" id="GO:0042026">
    <property type="term" value="P:protein refolding"/>
    <property type="evidence" value="ECO:0007669"/>
    <property type="project" value="UniProtKB-UniRule"/>
</dbReference>
<dbReference type="CDD" id="cd03344">
    <property type="entry name" value="GroEL"/>
    <property type="match status" value="1"/>
</dbReference>
<dbReference type="FunFam" id="1.10.560.10:FF:000001">
    <property type="entry name" value="60 kDa chaperonin"/>
    <property type="match status" value="1"/>
</dbReference>
<dbReference type="FunFam" id="3.50.7.10:FF:000001">
    <property type="entry name" value="60 kDa chaperonin"/>
    <property type="match status" value="1"/>
</dbReference>
<dbReference type="Gene3D" id="3.50.7.10">
    <property type="entry name" value="GroEL"/>
    <property type="match status" value="1"/>
</dbReference>
<dbReference type="Gene3D" id="1.10.560.10">
    <property type="entry name" value="GroEL-like equatorial domain"/>
    <property type="match status" value="1"/>
</dbReference>
<dbReference type="Gene3D" id="3.30.260.10">
    <property type="entry name" value="TCP-1-like chaperonin intermediate domain"/>
    <property type="match status" value="1"/>
</dbReference>
<dbReference type="HAMAP" id="MF_00600">
    <property type="entry name" value="CH60"/>
    <property type="match status" value="1"/>
</dbReference>
<dbReference type="InterPro" id="IPR018370">
    <property type="entry name" value="Chaperonin_Cpn60_CS"/>
</dbReference>
<dbReference type="InterPro" id="IPR001844">
    <property type="entry name" value="Cpn60/GroEL"/>
</dbReference>
<dbReference type="InterPro" id="IPR002423">
    <property type="entry name" value="Cpn60/GroEL/TCP-1"/>
</dbReference>
<dbReference type="InterPro" id="IPR027409">
    <property type="entry name" value="GroEL-like_apical_dom_sf"/>
</dbReference>
<dbReference type="InterPro" id="IPR027413">
    <property type="entry name" value="GROEL-like_equatorial_sf"/>
</dbReference>
<dbReference type="InterPro" id="IPR027410">
    <property type="entry name" value="TCP-1-like_intermed_sf"/>
</dbReference>
<dbReference type="NCBIfam" id="TIGR02348">
    <property type="entry name" value="GroEL"/>
    <property type="match status" value="1"/>
</dbReference>
<dbReference type="NCBIfam" id="NF000592">
    <property type="entry name" value="PRK00013.1"/>
    <property type="match status" value="1"/>
</dbReference>
<dbReference type="NCBIfam" id="NF009487">
    <property type="entry name" value="PRK12849.1"/>
    <property type="match status" value="1"/>
</dbReference>
<dbReference type="NCBIfam" id="NF009488">
    <property type="entry name" value="PRK12850.1"/>
    <property type="match status" value="1"/>
</dbReference>
<dbReference type="NCBIfam" id="NF009489">
    <property type="entry name" value="PRK12851.1"/>
    <property type="match status" value="1"/>
</dbReference>
<dbReference type="PANTHER" id="PTHR45633">
    <property type="entry name" value="60 KDA HEAT SHOCK PROTEIN, MITOCHONDRIAL"/>
    <property type="match status" value="1"/>
</dbReference>
<dbReference type="Pfam" id="PF00118">
    <property type="entry name" value="Cpn60_TCP1"/>
    <property type="match status" value="1"/>
</dbReference>
<dbReference type="PRINTS" id="PR00298">
    <property type="entry name" value="CHAPERONIN60"/>
</dbReference>
<dbReference type="SUPFAM" id="SSF52029">
    <property type="entry name" value="GroEL apical domain-like"/>
    <property type="match status" value="1"/>
</dbReference>
<dbReference type="SUPFAM" id="SSF48592">
    <property type="entry name" value="GroEL equatorial domain-like"/>
    <property type="match status" value="1"/>
</dbReference>
<dbReference type="SUPFAM" id="SSF54849">
    <property type="entry name" value="GroEL-intermediate domain like"/>
    <property type="match status" value="1"/>
</dbReference>
<dbReference type="PROSITE" id="PS00296">
    <property type="entry name" value="CHAPERONINS_CPN60"/>
    <property type="match status" value="1"/>
</dbReference>
<protein>
    <recommendedName>
        <fullName evidence="1">Chaperonin GroEL 1</fullName>
        <ecNumber evidence="1">5.6.1.7</ecNumber>
    </recommendedName>
    <alternativeName>
        <fullName evidence="1">60 kDa chaperonin 1</fullName>
    </alternativeName>
    <alternativeName>
        <fullName evidence="1">Chaperonin-60 1</fullName>
        <shortName evidence="1">Cpn60 1</shortName>
    </alternativeName>
</protein>
<gene>
    <name evidence="1" type="primary">groEL1</name>
    <name evidence="1" type="synonym">groL1</name>
    <name type="ordered locus">BRADO2697</name>
</gene>
<keyword id="KW-0067">ATP-binding</keyword>
<keyword id="KW-0143">Chaperone</keyword>
<keyword id="KW-0963">Cytoplasm</keyword>
<keyword id="KW-0413">Isomerase</keyword>
<keyword id="KW-0547">Nucleotide-binding</keyword>
<keyword id="KW-1185">Reference proteome</keyword>